<keyword id="KW-0687">Ribonucleoprotein</keyword>
<keyword id="KW-0689">Ribosomal protein</keyword>
<dbReference type="EMBL" id="CR767821">
    <property type="protein sequence ID" value="CAH58210.1"/>
    <property type="molecule type" value="Genomic_DNA"/>
</dbReference>
<dbReference type="EMBL" id="CR925678">
    <property type="protein sequence ID" value="CAI26998.1"/>
    <property type="molecule type" value="Genomic_DNA"/>
</dbReference>
<dbReference type="RefSeq" id="WP_011155163.1">
    <property type="nucleotide sequence ID" value="NC_005295.2"/>
</dbReference>
<dbReference type="SMR" id="Q5HB48"/>
<dbReference type="GeneID" id="33057999"/>
<dbReference type="KEGG" id="eru:Erum4820"/>
<dbReference type="KEGG" id="erw:ERWE_CDS_05040"/>
<dbReference type="eggNOG" id="COG0211">
    <property type="taxonomic scope" value="Bacteria"/>
</dbReference>
<dbReference type="HOGENOM" id="CLU_095424_4_1_5"/>
<dbReference type="Proteomes" id="UP000001021">
    <property type="component" value="Chromosome"/>
</dbReference>
<dbReference type="GO" id="GO:1990904">
    <property type="term" value="C:ribonucleoprotein complex"/>
    <property type="evidence" value="ECO:0007669"/>
    <property type="project" value="UniProtKB-KW"/>
</dbReference>
<dbReference type="GO" id="GO:0005840">
    <property type="term" value="C:ribosome"/>
    <property type="evidence" value="ECO:0007669"/>
    <property type="project" value="UniProtKB-KW"/>
</dbReference>
<dbReference type="GO" id="GO:0003735">
    <property type="term" value="F:structural constituent of ribosome"/>
    <property type="evidence" value="ECO:0007669"/>
    <property type="project" value="InterPro"/>
</dbReference>
<dbReference type="GO" id="GO:0006412">
    <property type="term" value="P:translation"/>
    <property type="evidence" value="ECO:0007669"/>
    <property type="project" value="UniProtKB-UniRule"/>
</dbReference>
<dbReference type="FunFam" id="2.40.50.100:FF:000020">
    <property type="entry name" value="50S ribosomal protein L27"/>
    <property type="match status" value="1"/>
</dbReference>
<dbReference type="Gene3D" id="2.40.50.100">
    <property type="match status" value="1"/>
</dbReference>
<dbReference type="HAMAP" id="MF_00539">
    <property type="entry name" value="Ribosomal_bL27"/>
    <property type="match status" value="1"/>
</dbReference>
<dbReference type="InterPro" id="IPR001684">
    <property type="entry name" value="Ribosomal_bL27"/>
</dbReference>
<dbReference type="InterPro" id="IPR018261">
    <property type="entry name" value="Ribosomal_bL27_CS"/>
</dbReference>
<dbReference type="NCBIfam" id="TIGR00062">
    <property type="entry name" value="L27"/>
    <property type="match status" value="1"/>
</dbReference>
<dbReference type="PANTHER" id="PTHR15893:SF0">
    <property type="entry name" value="LARGE RIBOSOMAL SUBUNIT PROTEIN BL27M"/>
    <property type="match status" value="1"/>
</dbReference>
<dbReference type="PANTHER" id="PTHR15893">
    <property type="entry name" value="RIBOSOMAL PROTEIN L27"/>
    <property type="match status" value="1"/>
</dbReference>
<dbReference type="Pfam" id="PF01016">
    <property type="entry name" value="Ribosomal_L27"/>
    <property type="match status" value="1"/>
</dbReference>
<dbReference type="PRINTS" id="PR00063">
    <property type="entry name" value="RIBOSOMALL27"/>
</dbReference>
<dbReference type="SUPFAM" id="SSF110324">
    <property type="entry name" value="Ribosomal L27 protein-like"/>
    <property type="match status" value="1"/>
</dbReference>
<dbReference type="PROSITE" id="PS00831">
    <property type="entry name" value="RIBOSOMAL_L27"/>
    <property type="match status" value="1"/>
</dbReference>
<comment type="similarity">
    <text evidence="1">Belongs to the bacterial ribosomal protein bL27 family.</text>
</comment>
<protein>
    <recommendedName>
        <fullName evidence="1">Large ribosomal subunit protein bL27</fullName>
    </recommendedName>
    <alternativeName>
        <fullName evidence="3">50S ribosomal protein L27</fullName>
    </alternativeName>
</protein>
<name>RL27_EHRRW</name>
<accession>Q5HB48</accession>
<accession>Q5FEI8</accession>
<sequence>MATKKSGGSSSNGRDSRGRRLGVKKFGSEKVIPGNIIIRQRGTKYHPGRNVGIGKDHTIFSKVSGVVYFRKGALNKTFVDVLEVNSAS</sequence>
<evidence type="ECO:0000255" key="1">
    <source>
        <dbReference type="HAMAP-Rule" id="MF_00539"/>
    </source>
</evidence>
<evidence type="ECO:0000256" key="2">
    <source>
        <dbReference type="SAM" id="MobiDB-lite"/>
    </source>
</evidence>
<evidence type="ECO:0000305" key="3"/>
<reference key="1">
    <citation type="journal article" date="2005" name="Proc. Natl. Acad. Sci. U.S.A.">
        <title>The genome of the heartwater agent Ehrlichia ruminantium contains multiple tandem repeats of actively variable copy number.</title>
        <authorList>
            <person name="Collins N.E."/>
            <person name="Liebenberg J."/>
            <person name="de Villiers E.P."/>
            <person name="Brayton K.A."/>
            <person name="Louw E."/>
            <person name="Pretorius A."/>
            <person name="Faber F.E."/>
            <person name="van Heerden H."/>
            <person name="Josemans A."/>
            <person name="van Kleef M."/>
            <person name="Steyn H.C."/>
            <person name="van Strijp M.F."/>
            <person name="Zweygarth E."/>
            <person name="Jongejan F."/>
            <person name="Maillard J.C."/>
            <person name="Berthier D."/>
            <person name="Botha M."/>
            <person name="Joubert F."/>
            <person name="Corton C.H."/>
            <person name="Thomson N.R."/>
            <person name="Allsopp M.T."/>
            <person name="Allsopp B.A."/>
        </authorList>
    </citation>
    <scope>NUCLEOTIDE SEQUENCE [LARGE SCALE GENOMIC DNA]</scope>
    <source>
        <strain>Welgevonden</strain>
    </source>
</reference>
<reference key="2">
    <citation type="journal article" date="2006" name="J. Bacteriol.">
        <title>Comparative genomic analysis of three strains of Ehrlichia ruminantium reveals an active process of genome size plasticity.</title>
        <authorList>
            <person name="Frutos R."/>
            <person name="Viari A."/>
            <person name="Ferraz C."/>
            <person name="Morgat A."/>
            <person name="Eychenie S."/>
            <person name="Kandassamy Y."/>
            <person name="Chantal I."/>
            <person name="Bensaid A."/>
            <person name="Coissac E."/>
            <person name="Vachiery N."/>
            <person name="Demaille J."/>
            <person name="Martinez D."/>
        </authorList>
    </citation>
    <scope>NUCLEOTIDE SEQUENCE [LARGE SCALE GENOMIC DNA]</scope>
    <source>
        <strain>Welgevonden</strain>
    </source>
</reference>
<organism>
    <name type="scientific">Ehrlichia ruminantium (strain Welgevonden)</name>
    <dbReference type="NCBI Taxonomy" id="254945"/>
    <lineage>
        <taxon>Bacteria</taxon>
        <taxon>Pseudomonadati</taxon>
        <taxon>Pseudomonadota</taxon>
        <taxon>Alphaproteobacteria</taxon>
        <taxon>Rickettsiales</taxon>
        <taxon>Anaplasmataceae</taxon>
        <taxon>Ehrlichia</taxon>
    </lineage>
</organism>
<feature type="chain" id="PRO_1000017475" description="Large ribosomal subunit protein bL27">
    <location>
        <begin position="1"/>
        <end position="88"/>
    </location>
</feature>
<feature type="region of interest" description="Disordered" evidence="2">
    <location>
        <begin position="1"/>
        <end position="24"/>
    </location>
</feature>
<feature type="compositionally biased region" description="Low complexity" evidence="2">
    <location>
        <begin position="1"/>
        <end position="13"/>
    </location>
</feature>
<proteinExistence type="inferred from homology"/>
<gene>
    <name evidence="1" type="primary">rpmA</name>
    <name type="ordered locus">Erum4820</name>
    <name type="ordered locus">ERWE_CDS_05040</name>
</gene>